<feature type="signal peptide" evidence="2">
    <location>
        <begin position="1"/>
        <end position="22"/>
    </location>
</feature>
<feature type="chain" id="PRO_0000280444" description="Ephrin type-A receptor 10">
    <location>
        <begin position="23"/>
        <end position="1007"/>
    </location>
</feature>
<feature type="topological domain" description="Extracellular" evidence="2">
    <location>
        <begin position="23"/>
        <end position="565"/>
    </location>
</feature>
<feature type="transmembrane region" description="Helical" evidence="2">
    <location>
        <begin position="566"/>
        <end position="586"/>
    </location>
</feature>
<feature type="topological domain" description="Cytoplasmic" evidence="2">
    <location>
        <begin position="587"/>
        <end position="1007"/>
    </location>
</feature>
<feature type="domain" description="Eph LBD" evidence="6">
    <location>
        <begin position="35"/>
        <end position="216"/>
    </location>
</feature>
<feature type="domain" description="Fibronectin type-III 1" evidence="5">
    <location>
        <begin position="340"/>
        <end position="452"/>
    </location>
</feature>
<feature type="domain" description="Fibronectin type-III 2" evidence="5">
    <location>
        <begin position="456"/>
        <end position="554"/>
    </location>
</feature>
<feature type="domain" description="Protein kinase" evidence="3">
    <location>
        <begin position="644"/>
        <end position="899"/>
    </location>
</feature>
<feature type="domain" description="SAM" evidence="4">
    <location>
        <begin position="932"/>
        <end position="996"/>
    </location>
</feature>
<feature type="region of interest" description="Disordered" evidence="7">
    <location>
        <begin position="323"/>
        <end position="343"/>
    </location>
</feature>
<feature type="region of interest" description="Disordered" evidence="7">
    <location>
        <begin position="467"/>
        <end position="486"/>
    </location>
</feature>
<feature type="glycosylation site" description="N-linked (GlcNAc...) asparagine" evidence="2">
    <location>
        <position position="311"/>
    </location>
</feature>
<feature type="glycosylation site" description="N-linked (GlcNAc...) asparagine" evidence="2">
    <location>
        <position position="486"/>
    </location>
</feature>
<feature type="splice variant" id="VSP_023676" description="In isoform 2." evidence="9 10">
    <original>ACPPGFYKV</original>
    <variation>GIQGPRGMG</variation>
    <location>
        <begin position="284"/>
        <end position="292"/>
    </location>
</feature>
<feature type="splice variant" id="VSP_023677" description="In isoform 2." evidence="9 10">
    <location>
        <begin position="293"/>
        <end position="1007"/>
    </location>
</feature>
<feature type="sequence conflict" description="In Ref. 1; BAC30423." evidence="11" ref="1">
    <original>A</original>
    <variation>S</variation>
    <location>
        <position position="156"/>
    </location>
</feature>
<feature type="sequence conflict" description="In Ref. 2; CAM16104." evidence="11" ref="2">
    <original>T</original>
    <variation>D</variation>
    <location>
        <position position="657"/>
    </location>
</feature>
<feature type="sequence conflict" description="In Ref. 2; CAM16104." evidence="11" ref="2">
    <original>T</original>
    <variation>A</variation>
    <location>
        <position position="980"/>
    </location>
</feature>
<feature type="sequence conflict" description="In Ref. 2; CAM16104." evidence="11" ref="2">
    <original>S</original>
    <variation>A</variation>
    <location>
        <position position="985"/>
    </location>
</feature>
<accession>Q8BYG9</accession>
<accession>A2A7J5</accession>
<accession>Q3UPV5</accession>
<sequence length="1007" mass="109100">METGAGPHPLRLFVCLIPLCLALLLGPGRPGTAEEVILLDSKASQAELGWTALPSTGWEEISGVDEHDRPIRTYQVCNVLEPNQDNWLQTGWISRGRGQRIFVELQFTLRDCSSIPGATGTCKETFNAYYLETETDLGRGRPRLGGNRPRKIDTIAADESFTQGDLGERKMKLNTEVREIGPLSRQGFHLAFQDVGACVALVSVRVYYKQCRATVRGLAAFPATAAESAFSTLVEVAGTCVAHSEGEPSSPPRMHCGADGEWLVPVGRCSCSAGFQEHGDICEACPPGFYKVSPRRPLCSPCPEHSLALENASTFCVCQDTYARSPTDPPSASCTRPPSAPRDLQYSLSRSPLALRLRWLPPADSGGRSDVTYSLLCLRCGRDGPAGACQPCGPRVAFVPRQAGLRERAATLLHLRPGARYTVRVAALNGVSGPAAAAGATYAQVTVSTGPGAPWEEDEIRRDRVEPQSVSLSWREPVPAGAPGTNSTEYEIRYYEKGQSEQTYSTVKTGAPAVTVTNLKPATRYVFQIRAASPGPLWEAQSFSPSIEVQTPGEVAPGSRDQSPAVVVTVVTISALLVLGSVMSVLAIWRRPCDGKGSGNAHDEEELYFHFKVPTRRTFLDPQSCGDPLQAVHLFAKELDAKSVTLEKSLGAGRFGTLCCGCLQLPGRQELPVAVHTLRDGCSDSQRLSFLAEALTLGQFDHSHIVRLEGVVTRGNPLMIVTEYMNLGALDDFLRHHEGELVAAQLMGLLPGLASAMKYLSEMGYVHRGLAARRVLVSSGLLCKISGFGRGPRDRAEAVYTTMSGRSPALWAAPETLQFGHFSSASDVWSFGIVMWEVMAFGERPYWDMSGQDVIKAVEDGFRLPPPRNCPSQLHRLMLECWQKDPSERPRFSQIHSILSKMGQEPEPSKCASTTCLRPPTPLADRAFSTFPSFGSVGAWLEALDLCRYKDNFSAAGYGSLEAVAEMTAQDLGSLGISSTEHRESLLSGISALQTRVLQLQGQGVQV</sequence>
<gene>
    <name type="primary">Epha10</name>
</gene>
<name>EPHAA_MOUSE</name>
<keyword id="KW-0025">Alternative splicing</keyword>
<keyword id="KW-0067">ATP-binding</keyword>
<keyword id="KW-1003">Cell membrane</keyword>
<keyword id="KW-0325">Glycoprotein</keyword>
<keyword id="KW-0418">Kinase</keyword>
<keyword id="KW-0472">Membrane</keyword>
<keyword id="KW-0547">Nucleotide-binding</keyword>
<keyword id="KW-0675">Receptor</keyword>
<keyword id="KW-1185">Reference proteome</keyword>
<keyword id="KW-0677">Repeat</keyword>
<keyword id="KW-0732">Signal</keyword>
<keyword id="KW-0808">Transferase</keyword>
<keyword id="KW-0812">Transmembrane</keyword>
<keyword id="KW-1133">Transmembrane helix</keyword>
<keyword id="KW-0829">Tyrosine-protein kinase</keyword>
<protein>
    <recommendedName>
        <fullName>Ephrin type-A receptor 10</fullName>
        <ecNumber>2.7.10.1</ecNumber>
    </recommendedName>
</protein>
<evidence type="ECO:0000250" key="1">
    <source>
        <dbReference type="UniProtKB" id="Q5JZY3"/>
    </source>
</evidence>
<evidence type="ECO:0000255" key="2"/>
<evidence type="ECO:0000255" key="3">
    <source>
        <dbReference type="PROSITE-ProRule" id="PRU00159"/>
    </source>
</evidence>
<evidence type="ECO:0000255" key="4">
    <source>
        <dbReference type="PROSITE-ProRule" id="PRU00184"/>
    </source>
</evidence>
<evidence type="ECO:0000255" key="5">
    <source>
        <dbReference type="PROSITE-ProRule" id="PRU00316"/>
    </source>
</evidence>
<evidence type="ECO:0000255" key="6">
    <source>
        <dbReference type="PROSITE-ProRule" id="PRU00883"/>
    </source>
</evidence>
<evidence type="ECO:0000256" key="7">
    <source>
        <dbReference type="SAM" id="MobiDB-lite"/>
    </source>
</evidence>
<evidence type="ECO:0000269" key="8">
    <source>
    </source>
</evidence>
<evidence type="ECO:0000303" key="9">
    <source>
    </source>
</evidence>
<evidence type="ECO:0000303" key="10">
    <source>
    </source>
</evidence>
<evidence type="ECO:0000305" key="11"/>
<reference key="1">
    <citation type="journal article" date="2005" name="Science">
        <title>The transcriptional landscape of the mammalian genome.</title>
        <authorList>
            <person name="Carninci P."/>
            <person name="Kasukawa T."/>
            <person name="Katayama S."/>
            <person name="Gough J."/>
            <person name="Frith M.C."/>
            <person name="Maeda N."/>
            <person name="Oyama R."/>
            <person name="Ravasi T."/>
            <person name="Lenhard B."/>
            <person name="Wells C."/>
            <person name="Kodzius R."/>
            <person name="Shimokawa K."/>
            <person name="Bajic V.B."/>
            <person name="Brenner S.E."/>
            <person name="Batalov S."/>
            <person name="Forrest A.R."/>
            <person name="Zavolan M."/>
            <person name="Davis M.J."/>
            <person name="Wilming L.G."/>
            <person name="Aidinis V."/>
            <person name="Allen J.E."/>
            <person name="Ambesi-Impiombato A."/>
            <person name="Apweiler R."/>
            <person name="Aturaliya R.N."/>
            <person name="Bailey T.L."/>
            <person name="Bansal M."/>
            <person name="Baxter L."/>
            <person name="Beisel K.W."/>
            <person name="Bersano T."/>
            <person name="Bono H."/>
            <person name="Chalk A.M."/>
            <person name="Chiu K.P."/>
            <person name="Choudhary V."/>
            <person name="Christoffels A."/>
            <person name="Clutterbuck D.R."/>
            <person name="Crowe M.L."/>
            <person name="Dalla E."/>
            <person name="Dalrymple B.P."/>
            <person name="de Bono B."/>
            <person name="Della Gatta G."/>
            <person name="di Bernardo D."/>
            <person name="Down T."/>
            <person name="Engstrom P."/>
            <person name="Fagiolini M."/>
            <person name="Faulkner G."/>
            <person name="Fletcher C.F."/>
            <person name="Fukushima T."/>
            <person name="Furuno M."/>
            <person name="Futaki S."/>
            <person name="Gariboldi M."/>
            <person name="Georgii-Hemming P."/>
            <person name="Gingeras T.R."/>
            <person name="Gojobori T."/>
            <person name="Green R.E."/>
            <person name="Gustincich S."/>
            <person name="Harbers M."/>
            <person name="Hayashi Y."/>
            <person name="Hensch T.K."/>
            <person name="Hirokawa N."/>
            <person name="Hill D."/>
            <person name="Huminiecki L."/>
            <person name="Iacono M."/>
            <person name="Ikeo K."/>
            <person name="Iwama A."/>
            <person name="Ishikawa T."/>
            <person name="Jakt M."/>
            <person name="Kanapin A."/>
            <person name="Katoh M."/>
            <person name="Kawasawa Y."/>
            <person name="Kelso J."/>
            <person name="Kitamura H."/>
            <person name="Kitano H."/>
            <person name="Kollias G."/>
            <person name="Krishnan S.P."/>
            <person name="Kruger A."/>
            <person name="Kummerfeld S.K."/>
            <person name="Kurochkin I.V."/>
            <person name="Lareau L.F."/>
            <person name="Lazarevic D."/>
            <person name="Lipovich L."/>
            <person name="Liu J."/>
            <person name="Liuni S."/>
            <person name="McWilliam S."/>
            <person name="Madan Babu M."/>
            <person name="Madera M."/>
            <person name="Marchionni L."/>
            <person name="Matsuda H."/>
            <person name="Matsuzawa S."/>
            <person name="Miki H."/>
            <person name="Mignone F."/>
            <person name="Miyake S."/>
            <person name="Morris K."/>
            <person name="Mottagui-Tabar S."/>
            <person name="Mulder N."/>
            <person name="Nakano N."/>
            <person name="Nakauchi H."/>
            <person name="Ng P."/>
            <person name="Nilsson R."/>
            <person name="Nishiguchi S."/>
            <person name="Nishikawa S."/>
            <person name="Nori F."/>
            <person name="Ohara O."/>
            <person name="Okazaki Y."/>
            <person name="Orlando V."/>
            <person name="Pang K.C."/>
            <person name="Pavan W.J."/>
            <person name="Pavesi G."/>
            <person name="Pesole G."/>
            <person name="Petrovsky N."/>
            <person name="Piazza S."/>
            <person name="Reed J."/>
            <person name="Reid J.F."/>
            <person name="Ring B.Z."/>
            <person name="Ringwald M."/>
            <person name="Rost B."/>
            <person name="Ruan Y."/>
            <person name="Salzberg S.L."/>
            <person name="Sandelin A."/>
            <person name="Schneider C."/>
            <person name="Schoenbach C."/>
            <person name="Sekiguchi K."/>
            <person name="Semple C.A."/>
            <person name="Seno S."/>
            <person name="Sessa L."/>
            <person name="Sheng Y."/>
            <person name="Shibata Y."/>
            <person name="Shimada H."/>
            <person name="Shimada K."/>
            <person name="Silva D."/>
            <person name="Sinclair B."/>
            <person name="Sperling S."/>
            <person name="Stupka E."/>
            <person name="Sugiura K."/>
            <person name="Sultana R."/>
            <person name="Takenaka Y."/>
            <person name="Taki K."/>
            <person name="Tammoja K."/>
            <person name="Tan S.L."/>
            <person name="Tang S."/>
            <person name="Taylor M.S."/>
            <person name="Tegner J."/>
            <person name="Teichmann S.A."/>
            <person name="Ueda H.R."/>
            <person name="van Nimwegen E."/>
            <person name="Verardo R."/>
            <person name="Wei C.L."/>
            <person name="Yagi K."/>
            <person name="Yamanishi H."/>
            <person name="Zabarovsky E."/>
            <person name="Zhu S."/>
            <person name="Zimmer A."/>
            <person name="Hide W."/>
            <person name="Bult C."/>
            <person name="Grimmond S.M."/>
            <person name="Teasdale R.D."/>
            <person name="Liu E.T."/>
            <person name="Brusic V."/>
            <person name="Quackenbush J."/>
            <person name="Wahlestedt C."/>
            <person name="Mattick J.S."/>
            <person name="Hume D.A."/>
            <person name="Kai C."/>
            <person name="Sasaki D."/>
            <person name="Tomaru Y."/>
            <person name="Fukuda S."/>
            <person name="Kanamori-Katayama M."/>
            <person name="Suzuki M."/>
            <person name="Aoki J."/>
            <person name="Arakawa T."/>
            <person name="Iida J."/>
            <person name="Imamura K."/>
            <person name="Itoh M."/>
            <person name="Kato T."/>
            <person name="Kawaji H."/>
            <person name="Kawagashira N."/>
            <person name="Kawashima T."/>
            <person name="Kojima M."/>
            <person name="Kondo S."/>
            <person name="Konno H."/>
            <person name="Nakano K."/>
            <person name="Ninomiya N."/>
            <person name="Nishio T."/>
            <person name="Okada M."/>
            <person name="Plessy C."/>
            <person name="Shibata K."/>
            <person name="Shiraki T."/>
            <person name="Suzuki S."/>
            <person name="Tagami M."/>
            <person name="Waki K."/>
            <person name="Watahiki A."/>
            <person name="Okamura-Oho Y."/>
            <person name="Suzuki H."/>
            <person name="Kawai J."/>
            <person name="Hayashizaki Y."/>
        </authorList>
    </citation>
    <scope>NUCLEOTIDE SEQUENCE [LARGE SCALE MRNA] (ISOFORM 2)</scope>
    <source>
        <strain>C57BL/6J</strain>
        <tissue>Eye</tissue>
        <tissue>Spinal cord</tissue>
    </source>
</reference>
<reference key="2">
    <citation type="journal article" date="2009" name="PLoS Biol.">
        <title>Lineage-specific biology revealed by a finished genome assembly of the mouse.</title>
        <authorList>
            <person name="Church D.M."/>
            <person name="Goodstadt L."/>
            <person name="Hillier L.W."/>
            <person name="Zody M.C."/>
            <person name="Goldstein S."/>
            <person name="She X."/>
            <person name="Bult C.J."/>
            <person name="Agarwala R."/>
            <person name="Cherry J.L."/>
            <person name="DiCuccio M."/>
            <person name="Hlavina W."/>
            <person name="Kapustin Y."/>
            <person name="Meric P."/>
            <person name="Maglott D."/>
            <person name="Birtle Z."/>
            <person name="Marques A.C."/>
            <person name="Graves T."/>
            <person name="Zhou S."/>
            <person name="Teague B."/>
            <person name="Potamousis K."/>
            <person name="Churas C."/>
            <person name="Place M."/>
            <person name="Herschleb J."/>
            <person name="Runnheim R."/>
            <person name="Forrest D."/>
            <person name="Amos-Landgraf J."/>
            <person name="Schwartz D.C."/>
            <person name="Cheng Z."/>
            <person name="Lindblad-Toh K."/>
            <person name="Eichler E.E."/>
            <person name="Ponting C.P."/>
        </authorList>
    </citation>
    <scope>NUCLEOTIDE SEQUENCE [LARGE SCALE GENOMIC DNA]</scope>
    <source>
        <strain>C57BL/6J</strain>
    </source>
</reference>
<reference key="3">
    <citation type="journal article" date="2004" name="Genome Res.">
        <title>The status, quality, and expansion of the NIH full-length cDNA project: the Mammalian Gene Collection (MGC).</title>
        <authorList>
            <consortium name="The MGC Project Team"/>
        </authorList>
    </citation>
    <scope>NUCLEOTIDE SEQUENCE [LARGE SCALE MRNA] (ISOFORM 2)</scope>
    <source>
        <tissue>Brain</tissue>
    </source>
</reference>
<reference key="4">
    <citation type="journal article" date="2023" name="Hum. Mol. Genet.">
        <title>A non-coding variant in 5' untranslated region drove up-regulation of pseudo-kinase EPHA10 and caused non-syndromic hearing loss in humans.</title>
        <authorList>
            <person name="Huang S."/>
            <person name="Ma L."/>
            <person name="Liu X."/>
            <person name="He C."/>
            <person name="Li J."/>
            <person name="Hu Z."/>
            <person name="Jiang L."/>
            <person name="Liu Y."/>
            <person name="Liu X."/>
            <person name="Feng Y."/>
            <person name="Cai X."/>
        </authorList>
    </citation>
    <scope>TISSUE SPECIFICITY</scope>
</reference>
<comment type="function">
    <text evidence="1">Receptor for members of the ephrin-A family. Binds to EFNA3, EFNA4 and EFNA5 (By similarity).</text>
</comment>
<comment type="catalytic activity">
    <reaction>
        <text>L-tyrosyl-[protein] + ATP = O-phospho-L-tyrosyl-[protein] + ADP + H(+)</text>
        <dbReference type="Rhea" id="RHEA:10596"/>
        <dbReference type="Rhea" id="RHEA-COMP:10136"/>
        <dbReference type="Rhea" id="RHEA-COMP:20101"/>
        <dbReference type="ChEBI" id="CHEBI:15378"/>
        <dbReference type="ChEBI" id="CHEBI:30616"/>
        <dbReference type="ChEBI" id="CHEBI:46858"/>
        <dbReference type="ChEBI" id="CHEBI:61978"/>
        <dbReference type="ChEBI" id="CHEBI:456216"/>
        <dbReference type="EC" id="2.7.10.1"/>
    </reaction>
</comment>
<comment type="subcellular location">
    <subcellularLocation>
        <location evidence="11">Cell membrane</location>
        <topology evidence="11">Single-pass membrane protein</topology>
    </subcellularLocation>
</comment>
<comment type="alternative products">
    <event type="alternative splicing"/>
    <isoform>
        <id>Q8BYG9-1</id>
        <name>1</name>
        <sequence type="displayed"/>
    </isoform>
    <isoform>
        <id>Q8BYG9-2</id>
        <name>2</name>
        <sequence type="described" ref="VSP_023676 VSP_023677"/>
    </isoform>
</comment>
<comment type="tissue specificity">
    <text evidence="8">Expressed in the cochlea, in the organ of Corti, spiral ganglion, and stria vascularis.</text>
</comment>
<comment type="domain">
    <text>The protein kinase domain is predicted to be catalytically inactive.</text>
</comment>
<comment type="similarity">
    <text evidence="3">Belongs to the protein kinase superfamily. Tyr protein kinase family. Ephrin receptor subfamily.</text>
</comment>
<comment type="sequence caution" evidence="11">
    <conflict type="erroneous gene model prediction">
        <sequence resource="EMBL-CDS" id="CAM16104"/>
    </conflict>
</comment>
<proteinExistence type="evidence at transcript level"/>
<dbReference type="EC" id="2.7.10.1"/>
<dbReference type="EMBL" id="AK039700">
    <property type="protein sequence ID" value="BAC30423.1"/>
    <property type="molecule type" value="mRNA"/>
</dbReference>
<dbReference type="EMBL" id="AK143168">
    <property type="protein sequence ID" value="BAE25289.1"/>
    <property type="molecule type" value="mRNA"/>
</dbReference>
<dbReference type="EMBL" id="AL606933">
    <property type="protein sequence ID" value="CAM16103.1"/>
    <property type="molecule type" value="Genomic_DNA"/>
</dbReference>
<dbReference type="EMBL" id="AL606933">
    <property type="protein sequence ID" value="CAM16104.1"/>
    <property type="status" value="ALT_SEQ"/>
    <property type="molecule type" value="Genomic_DNA"/>
</dbReference>
<dbReference type="EMBL" id="BC116991">
    <property type="protein sequence ID" value="AAI16992.1"/>
    <property type="molecule type" value="mRNA"/>
</dbReference>
<dbReference type="EMBL" id="BC119084">
    <property type="protein sequence ID" value="AAI19085.1"/>
    <property type="molecule type" value="mRNA"/>
</dbReference>
<dbReference type="CCDS" id="CCDS18630.1">
    <molecule id="Q8BYG9-2"/>
</dbReference>
<dbReference type="RefSeq" id="NP_808339.2">
    <molecule id="Q8BYG9-2"/>
    <property type="nucleotide sequence ID" value="NM_177671.6"/>
</dbReference>
<dbReference type="SMR" id="Q8BYG9"/>
<dbReference type="FunCoup" id="Q8BYG9">
    <property type="interactions" value="18"/>
</dbReference>
<dbReference type="STRING" id="10090.ENSMUSP00000050810"/>
<dbReference type="GlyCosmos" id="Q8BYG9">
    <property type="glycosylation" value="2 sites, No reported glycans"/>
</dbReference>
<dbReference type="GlyGen" id="Q8BYG9">
    <property type="glycosylation" value="2 sites, 1 N-linked glycan (1 site)"/>
</dbReference>
<dbReference type="iPTMnet" id="Q8BYG9"/>
<dbReference type="PhosphoSitePlus" id="Q8BYG9"/>
<dbReference type="jPOST" id="Q8BYG9"/>
<dbReference type="PaxDb" id="10090-ENSMUSP00000050810"/>
<dbReference type="PeptideAtlas" id="Q8BYG9"/>
<dbReference type="ProteomicsDB" id="277886">
    <molecule id="Q8BYG9-1"/>
</dbReference>
<dbReference type="ProteomicsDB" id="277887">
    <molecule id="Q8BYG9-2"/>
</dbReference>
<dbReference type="Antibodypedia" id="51311">
    <property type="antibodies" value="274 antibodies from 31 providers"/>
</dbReference>
<dbReference type="DNASU" id="230735"/>
<dbReference type="Ensembl" id="ENSMUST00000059343.7">
    <molecule id="Q8BYG9-2"/>
    <property type="protein sequence ID" value="ENSMUSP00000050810.6"/>
    <property type="gene ID" value="ENSMUSG00000028876.8"/>
</dbReference>
<dbReference type="GeneID" id="230735"/>
<dbReference type="KEGG" id="mmu:230735"/>
<dbReference type="UCSC" id="uc008urh.2">
    <molecule id="Q8BYG9-2"/>
    <property type="organism name" value="mouse"/>
</dbReference>
<dbReference type="UCSC" id="uc008uri.2">
    <molecule id="Q8BYG9-1"/>
    <property type="organism name" value="mouse"/>
</dbReference>
<dbReference type="AGR" id="MGI:3586824"/>
<dbReference type="CTD" id="284656"/>
<dbReference type="MGI" id="MGI:3586824">
    <property type="gene designation" value="Epha10"/>
</dbReference>
<dbReference type="VEuPathDB" id="HostDB:ENSMUSG00000028876"/>
<dbReference type="GeneTree" id="ENSGT00940000160752"/>
<dbReference type="HOGENOM" id="CLU_000288_141_3_1"/>
<dbReference type="InParanoid" id="Q8BYG9"/>
<dbReference type="OMA" id="CEGIQGP"/>
<dbReference type="PhylomeDB" id="Q8BYG9"/>
<dbReference type="Reactome" id="R-MMU-2682334">
    <property type="pathway name" value="EPH-Ephrin signaling"/>
</dbReference>
<dbReference type="Reactome" id="R-MMU-3928663">
    <property type="pathway name" value="EPHA-mediated growth cone collapse"/>
</dbReference>
<dbReference type="Reactome" id="R-MMU-3928665">
    <property type="pathway name" value="EPH-ephrin mediated repulsion of cells"/>
</dbReference>
<dbReference type="BioGRID-ORCS" id="230735">
    <property type="hits" value="2 hits in 46 CRISPR screens"/>
</dbReference>
<dbReference type="ChiTaRS" id="Epha10">
    <property type="organism name" value="mouse"/>
</dbReference>
<dbReference type="PRO" id="PR:Q8BYG9"/>
<dbReference type="Proteomes" id="UP000000589">
    <property type="component" value="Chromosome 4"/>
</dbReference>
<dbReference type="RNAct" id="Q8BYG9">
    <property type="molecule type" value="protein"/>
</dbReference>
<dbReference type="Bgee" id="ENSMUSG00000028876">
    <property type="expression patterns" value="Expressed in piriform cortex and 71 other cell types or tissues"/>
</dbReference>
<dbReference type="ExpressionAtlas" id="Q8BYG9">
    <property type="expression patterns" value="baseline and differential"/>
</dbReference>
<dbReference type="GO" id="GO:0005886">
    <property type="term" value="C:plasma membrane"/>
    <property type="evidence" value="ECO:0007669"/>
    <property type="project" value="UniProtKB-SubCell"/>
</dbReference>
<dbReference type="GO" id="GO:0005524">
    <property type="term" value="F:ATP binding"/>
    <property type="evidence" value="ECO:0007669"/>
    <property type="project" value="UniProtKB-KW"/>
</dbReference>
<dbReference type="GO" id="GO:0005003">
    <property type="term" value="F:ephrin receptor activity"/>
    <property type="evidence" value="ECO:0007669"/>
    <property type="project" value="InterPro"/>
</dbReference>
<dbReference type="CDD" id="cd00063">
    <property type="entry name" value="FN3"/>
    <property type="match status" value="2"/>
</dbReference>
<dbReference type="CDD" id="cd09549">
    <property type="entry name" value="SAM_EPH-A10"/>
    <property type="match status" value="1"/>
</dbReference>
<dbReference type="FunFam" id="1.10.510.10:FF:000360">
    <property type="entry name" value="Ephrin type-A receptor 10"/>
    <property type="match status" value="1"/>
</dbReference>
<dbReference type="FunFam" id="2.60.40.10:FF:001125">
    <property type="entry name" value="Ephrin type-A receptor 10"/>
    <property type="match status" value="1"/>
</dbReference>
<dbReference type="FunFam" id="1.10.150.50:FF:000066">
    <property type="entry name" value="ephrin type-A receptor 10"/>
    <property type="match status" value="1"/>
</dbReference>
<dbReference type="FunFam" id="3.30.200.20:FF:000505">
    <property type="entry name" value="ephrin type-A receptor 10"/>
    <property type="match status" value="1"/>
</dbReference>
<dbReference type="FunFam" id="2.10.50.10:FF:000001">
    <property type="entry name" value="Ephrin type-A receptor 5"/>
    <property type="match status" value="1"/>
</dbReference>
<dbReference type="FunFam" id="2.60.40.1770:FF:000001">
    <property type="entry name" value="Ephrin type-A receptor 5"/>
    <property type="match status" value="1"/>
</dbReference>
<dbReference type="FunFam" id="2.60.40.10:FF:000059">
    <property type="entry name" value="Ephrin type-A receptor 6"/>
    <property type="match status" value="1"/>
</dbReference>
<dbReference type="FunFam" id="2.60.120.260:FF:000001">
    <property type="entry name" value="Ephrin type-A receptor 7"/>
    <property type="match status" value="1"/>
</dbReference>
<dbReference type="Gene3D" id="2.60.40.1770">
    <property type="entry name" value="ephrin a2 ectodomain"/>
    <property type="match status" value="1"/>
</dbReference>
<dbReference type="Gene3D" id="2.60.120.260">
    <property type="entry name" value="Galactose-binding domain-like"/>
    <property type="match status" value="1"/>
</dbReference>
<dbReference type="Gene3D" id="2.60.40.10">
    <property type="entry name" value="Immunoglobulins"/>
    <property type="match status" value="2"/>
</dbReference>
<dbReference type="Gene3D" id="3.30.200.20">
    <property type="entry name" value="Phosphorylase Kinase, domain 1"/>
    <property type="match status" value="1"/>
</dbReference>
<dbReference type="Gene3D" id="1.10.150.50">
    <property type="entry name" value="Transcription Factor, Ets-1"/>
    <property type="match status" value="1"/>
</dbReference>
<dbReference type="Gene3D" id="1.10.510.10">
    <property type="entry name" value="Transferase(Phosphotransferase) domain 1"/>
    <property type="match status" value="1"/>
</dbReference>
<dbReference type="Gene3D" id="2.10.50.10">
    <property type="entry name" value="Tumor Necrosis Factor Receptor, subunit A, domain 2"/>
    <property type="match status" value="1"/>
</dbReference>
<dbReference type="InterPro" id="IPR027936">
    <property type="entry name" value="Eph_TM"/>
</dbReference>
<dbReference type="InterPro" id="IPR001090">
    <property type="entry name" value="Ephrin_rcpt_lig-bd_dom"/>
</dbReference>
<dbReference type="InterPro" id="IPR050449">
    <property type="entry name" value="Ephrin_rcpt_TKs"/>
</dbReference>
<dbReference type="InterPro" id="IPR003961">
    <property type="entry name" value="FN3_dom"/>
</dbReference>
<dbReference type="InterPro" id="IPR036116">
    <property type="entry name" value="FN3_sf"/>
</dbReference>
<dbReference type="InterPro" id="IPR008979">
    <property type="entry name" value="Galactose-bd-like_sf"/>
</dbReference>
<dbReference type="InterPro" id="IPR013783">
    <property type="entry name" value="Ig-like_fold"/>
</dbReference>
<dbReference type="InterPro" id="IPR011009">
    <property type="entry name" value="Kinase-like_dom_sf"/>
</dbReference>
<dbReference type="InterPro" id="IPR000719">
    <property type="entry name" value="Prot_kinase_dom"/>
</dbReference>
<dbReference type="InterPro" id="IPR001660">
    <property type="entry name" value="SAM"/>
</dbReference>
<dbReference type="InterPro" id="IPR013761">
    <property type="entry name" value="SAM/pointed_sf"/>
</dbReference>
<dbReference type="InterPro" id="IPR001245">
    <property type="entry name" value="Ser-Thr/Tyr_kinase_cat_dom"/>
</dbReference>
<dbReference type="InterPro" id="IPR016257">
    <property type="entry name" value="Tyr_kinase_ephrin_rcpt"/>
</dbReference>
<dbReference type="InterPro" id="IPR001426">
    <property type="entry name" value="Tyr_kinase_rcpt_V_CS"/>
</dbReference>
<dbReference type="PANTHER" id="PTHR46877">
    <property type="entry name" value="EPH RECEPTOR A5"/>
    <property type="match status" value="1"/>
</dbReference>
<dbReference type="PANTHER" id="PTHR46877:SF16">
    <property type="entry name" value="EPHRIN TYPE-A RECEPTOR 10"/>
    <property type="match status" value="1"/>
</dbReference>
<dbReference type="Pfam" id="PF14575">
    <property type="entry name" value="EphA2_TM"/>
    <property type="match status" value="1"/>
</dbReference>
<dbReference type="Pfam" id="PF01404">
    <property type="entry name" value="Ephrin_lbd"/>
    <property type="match status" value="1"/>
</dbReference>
<dbReference type="Pfam" id="PF00041">
    <property type="entry name" value="fn3"/>
    <property type="match status" value="2"/>
</dbReference>
<dbReference type="Pfam" id="PF07714">
    <property type="entry name" value="PK_Tyr_Ser-Thr"/>
    <property type="match status" value="1"/>
</dbReference>
<dbReference type="Pfam" id="PF07647">
    <property type="entry name" value="SAM_2"/>
    <property type="match status" value="1"/>
</dbReference>
<dbReference type="PIRSF" id="PIRSF000666">
    <property type="entry name" value="TyrPK_ephrin_receptor"/>
    <property type="match status" value="1"/>
</dbReference>
<dbReference type="PRINTS" id="PR00109">
    <property type="entry name" value="TYRKINASE"/>
</dbReference>
<dbReference type="SMART" id="SM00615">
    <property type="entry name" value="EPH_lbd"/>
    <property type="match status" value="1"/>
</dbReference>
<dbReference type="SMART" id="SM01411">
    <property type="entry name" value="Ephrin_rec_like"/>
    <property type="match status" value="1"/>
</dbReference>
<dbReference type="SMART" id="SM00060">
    <property type="entry name" value="FN3"/>
    <property type="match status" value="2"/>
</dbReference>
<dbReference type="SMART" id="SM00454">
    <property type="entry name" value="SAM"/>
    <property type="match status" value="1"/>
</dbReference>
<dbReference type="SUPFAM" id="SSF49265">
    <property type="entry name" value="Fibronectin type III"/>
    <property type="match status" value="1"/>
</dbReference>
<dbReference type="SUPFAM" id="SSF49785">
    <property type="entry name" value="Galactose-binding domain-like"/>
    <property type="match status" value="1"/>
</dbReference>
<dbReference type="SUPFAM" id="SSF56112">
    <property type="entry name" value="Protein kinase-like (PK-like)"/>
    <property type="match status" value="1"/>
</dbReference>
<dbReference type="SUPFAM" id="SSF47769">
    <property type="entry name" value="SAM/Pointed domain"/>
    <property type="match status" value="1"/>
</dbReference>
<dbReference type="PROSITE" id="PS01186">
    <property type="entry name" value="EGF_2"/>
    <property type="match status" value="1"/>
</dbReference>
<dbReference type="PROSITE" id="PS51550">
    <property type="entry name" value="EPH_LBD"/>
    <property type="match status" value="1"/>
</dbReference>
<dbReference type="PROSITE" id="PS50853">
    <property type="entry name" value="FN3"/>
    <property type="match status" value="2"/>
</dbReference>
<dbReference type="PROSITE" id="PS50011">
    <property type="entry name" value="PROTEIN_KINASE_DOM"/>
    <property type="match status" value="1"/>
</dbReference>
<dbReference type="PROSITE" id="PS00790">
    <property type="entry name" value="RECEPTOR_TYR_KIN_V_1"/>
    <property type="match status" value="1"/>
</dbReference>
<dbReference type="PROSITE" id="PS00791">
    <property type="entry name" value="RECEPTOR_TYR_KIN_V_2"/>
    <property type="match status" value="1"/>
</dbReference>
<dbReference type="PROSITE" id="PS50105">
    <property type="entry name" value="SAM_DOMAIN"/>
    <property type="match status" value="1"/>
</dbReference>
<organism>
    <name type="scientific">Mus musculus</name>
    <name type="common">Mouse</name>
    <dbReference type="NCBI Taxonomy" id="10090"/>
    <lineage>
        <taxon>Eukaryota</taxon>
        <taxon>Metazoa</taxon>
        <taxon>Chordata</taxon>
        <taxon>Craniata</taxon>
        <taxon>Vertebrata</taxon>
        <taxon>Euteleostomi</taxon>
        <taxon>Mammalia</taxon>
        <taxon>Eutheria</taxon>
        <taxon>Euarchontoglires</taxon>
        <taxon>Glires</taxon>
        <taxon>Rodentia</taxon>
        <taxon>Myomorpha</taxon>
        <taxon>Muroidea</taxon>
        <taxon>Muridae</taxon>
        <taxon>Murinae</taxon>
        <taxon>Mus</taxon>
        <taxon>Mus</taxon>
    </lineage>
</organism>